<feature type="chain" id="PRO_0000407228" description="RNA-splicing ligase RtcB homolog">
    <location>
        <begin position="1"/>
        <end position="505"/>
    </location>
</feature>
<feature type="active site" description="GMP-histidine intermediate" evidence="1">
    <location>
        <position position="428"/>
    </location>
</feature>
<feature type="binding site" evidence="1">
    <location>
        <position position="119"/>
    </location>
    <ligand>
        <name>Mn(2+)</name>
        <dbReference type="ChEBI" id="CHEBI:29035"/>
        <label>1</label>
    </ligand>
</feature>
<feature type="binding site" evidence="1">
    <location>
        <position position="122"/>
    </location>
    <ligand>
        <name>Mn(2+)</name>
        <dbReference type="ChEBI" id="CHEBI:29035"/>
        <label>1</label>
    </ligand>
</feature>
<feature type="binding site" evidence="1">
    <location>
        <position position="122"/>
    </location>
    <ligand>
        <name>Mn(2+)</name>
        <dbReference type="ChEBI" id="CHEBI:29035"/>
        <label>2</label>
    </ligand>
</feature>
<feature type="binding site" evidence="1">
    <location>
        <begin position="226"/>
        <end position="230"/>
    </location>
    <ligand>
        <name>GMP</name>
        <dbReference type="ChEBI" id="CHEBI:58115"/>
    </ligand>
</feature>
<feature type="binding site" evidence="1">
    <location>
        <position position="227"/>
    </location>
    <ligand>
        <name>Mn(2+)</name>
        <dbReference type="ChEBI" id="CHEBI:29035"/>
        <label>1</label>
    </ligand>
</feature>
<feature type="binding site" evidence="1">
    <location>
        <position position="259"/>
    </location>
    <ligand>
        <name>Mn(2+)</name>
        <dbReference type="ChEBI" id="CHEBI:29035"/>
        <label>2</label>
    </ligand>
</feature>
<feature type="binding site" evidence="1">
    <location>
        <begin position="353"/>
        <end position="354"/>
    </location>
    <ligand>
        <name>GMP</name>
        <dbReference type="ChEBI" id="CHEBI:58115"/>
    </ligand>
</feature>
<feature type="binding site" evidence="1">
    <location>
        <position position="353"/>
    </location>
    <ligand>
        <name>Mn(2+)</name>
        <dbReference type="ChEBI" id="CHEBI:29035"/>
        <label>2</label>
    </ligand>
</feature>
<feature type="binding site" evidence="1">
    <location>
        <begin position="402"/>
        <end position="405"/>
    </location>
    <ligand>
        <name>GMP</name>
        <dbReference type="ChEBI" id="CHEBI:58115"/>
    </ligand>
</feature>
<feature type="binding site" evidence="1">
    <location>
        <position position="409"/>
    </location>
    <ligand>
        <name>GMP</name>
        <dbReference type="ChEBI" id="CHEBI:58115"/>
    </ligand>
</feature>
<feature type="binding site" evidence="1">
    <location>
        <begin position="428"/>
        <end position="431"/>
    </location>
    <ligand>
        <name>GMP</name>
        <dbReference type="ChEBI" id="CHEBI:58115"/>
    </ligand>
</feature>
<feature type="binding site" evidence="1">
    <location>
        <position position="504"/>
    </location>
    <ligand>
        <name>GMP</name>
        <dbReference type="ChEBI" id="CHEBI:58115"/>
    </ligand>
</feature>
<sequence length="505" mass="55470">MPRTYDEECSYIERITDVVYRIKKGFVPNMNVEGRFYVNTALEKLMFEELRNACRLDGIGGFLPAVRQIGNVAALPAIVNASIGLPDIHSGYGFAIGNIAAFDVSDPDAVVSPGGVGFDINCGVRLIRTNLSEKDVQPVKEQLAQSLFDHIPVGVGSKGIIPIGAQQFEECLEMGMDWTLREGYSWAEDKEHCEEYGRMLQADAAKVSPRAKKRGLPQLGTLGAGNHYGEVQVIDEIYDEYAASRMGIDRLGQVCIMIHCGSRGLGHQVATDSLVVMEKAMKRDNIIVNDRQLACARINSMEGQDYLKGMAAAANFAWVNRSCMTFCARQAFAKVFNTSPDDLDMHVIYDVSHNIAKIEEHLINGRPKQLCVHRKGSTRAFPPHHPLIPVDYQLTGQPVLIGGTMGTCSYVLTGTEQGMNETFATTCHGAGRALSRAKSRRNIDFQEVLNKMQAMGISIRVASPKLVMEEAPESYKNVTDVVNTCHEAGISKKSVKLRPIAVIKG</sequence>
<accession>A8QC60</accession>
<protein>
    <recommendedName>
        <fullName evidence="1">RNA-splicing ligase RtcB homolog</fullName>
        <ecNumber evidence="1">6.5.1.8</ecNumber>
    </recommendedName>
    <alternativeName>
        <fullName evidence="1">3'-phosphate/5'-hydroxy nucleic acid ligase</fullName>
    </alternativeName>
</protein>
<name>RTCB_BRUMA</name>
<proteinExistence type="inferred from homology"/>
<keyword id="KW-0342">GTP-binding</keyword>
<keyword id="KW-0436">Ligase</keyword>
<keyword id="KW-0464">Manganese</keyword>
<keyword id="KW-0479">Metal-binding</keyword>
<keyword id="KW-0547">Nucleotide-binding</keyword>
<keyword id="KW-1185">Reference proteome</keyword>
<keyword id="KW-0819">tRNA processing</keyword>
<gene>
    <name type="ORF">Bm1_49220</name>
</gene>
<reference key="1">
    <citation type="journal article" date="2007" name="Science">
        <title>Draft genome of the filarial nematode parasite Brugia malayi.</title>
        <authorList>
            <person name="Ghedin E."/>
            <person name="Wang S."/>
            <person name="Spiro D."/>
            <person name="Caler E."/>
            <person name="Zhao Q."/>
            <person name="Crabtree J."/>
            <person name="Allen J.E."/>
            <person name="Delcher A.L."/>
            <person name="Guiliano D.B."/>
            <person name="Miranda-Saavedra D."/>
            <person name="Angiuoli S.V."/>
            <person name="Creasy T."/>
            <person name="Amedeo P."/>
            <person name="Haas B."/>
            <person name="El-Sayed N.M."/>
            <person name="Wortman J.R."/>
            <person name="Feldblyum T."/>
            <person name="Tallon L."/>
            <person name="Schatz M."/>
            <person name="Shumway M."/>
            <person name="Koo H."/>
            <person name="Salzberg S.L."/>
            <person name="Schobel S."/>
            <person name="Pertea M."/>
            <person name="Pop M."/>
            <person name="White O."/>
            <person name="Barton G.J."/>
            <person name="Carlow C.K.S."/>
            <person name="Crawford M.J."/>
            <person name="Daub J."/>
            <person name="Dimmic M.W."/>
            <person name="Estes C.F."/>
            <person name="Foster J.M."/>
            <person name="Ganatra M."/>
            <person name="Gregory W.F."/>
            <person name="Johnson N.M."/>
            <person name="Jin J."/>
            <person name="Komuniecki R."/>
            <person name="Korf I."/>
            <person name="Kumar S."/>
            <person name="Laney S."/>
            <person name="Li B.-W."/>
            <person name="Li W."/>
            <person name="Lindblom T.H."/>
            <person name="Lustigman S."/>
            <person name="Ma D."/>
            <person name="Maina C.V."/>
            <person name="Martin D.M."/>
            <person name="McCarter J.P."/>
            <person name="McReynolds L."/>
            <person name="Mitreva M."/>
            <person name="Nutman T.B."/>
            <person name="Parkinson J."/>
            <person name="Peregrin-Alvarez J.M."/>
            <person name="Poole C."/>
            <person name="Ren Q."/>
            <person name="Saunders L."/>
            <person name="Sluder A.E."/>
            <person name="Smith K."/>
            <person name="Stanke M."/>
            <person name="Unnasch T.R."/>
            <person name="Ware J."/>
            <person name="Wei A.D."/>
            <person name="Weil G."/>
            <person name="Williams D.J."/>
            <person name="Zhang Y."/>
            <person name="Williams S.A."/>
            <person name="Fraser-Liggett C."/>
            <person name="Slatko B."/>
            <person name="Blaxter M.L."/>
            <person name="Scott A.L."/>
        </authorList>
    </citation>
    <scope>NUCLEOTIDE SEQUENCE [LARGE SCALE GENOMIC DNA]</scope>
</reference>
<organism>
    <name type="scientific">Brugia malayi</name>
    <name type="common">Filarial nematode worm</name>
    <dbReference type="NCBI Taxonomy" id="6279"/>
    <lineage>
        <taxon>Eukaryota</taxon>
        <taxon>Metazoa</taxon>
        <taxon>Ecdysozoa</taxon>
        <taxon>Nematoda</taxon>
        <taxon>Chromadorea</taxon>
        <taxon>Rhabditida</taxon>
        <taxon>Spirurina</taxon>
        <taxon>Spiruromorpha</taxon>
        <taxon>Filarioidea</taxon>
        <taxon>Onchocercidae</taxon>
        <taxon>Brugia</taxon>
    </lineage>
</organism>
<evidence type="ECO:0000255" key="1">
    <source>
        <dbReference type="HAMAP-Rule" id="MF_03144"/>
    </source>
</evidence>
<dbReference type="EC" id="6.5.1.8" evidence="1"/>
<dbReference type="EMBL" id="DS239429">
    <property type="protein sequence ID" value="EDP29990.1"/>
    <property type="molecule type" value="Genomic_DNA"/>
</dbReference>
<dbReference type="SMR" id="A8QC60"/>
<dbReference type="FunCoup" id="A8QC60">
    <property type="interactions" value="1816"/>
</dbReference>
<dbReference type="STRING" id="6279.A8QC60"/>
<dbReference type="EnsemblMetazoa" id="Bm3402.1">
    <property type="protein sequence ID" value="Bm3402.1"/>
    <property type="gene ID" value="WBGene00223663"/>
</dbReference>
<dbReference type="GeneID" id="6104729"/>
<dbReference type="KEGG" id="bmy:BM_BM3402"/>
<dbReference type="CTD" id="6104729"/>
<dbReference type="WormBase" id="Bm3402">
    <property type="protein sequence ID" value="BM21216"/>
    <property type="gene ID" value="WBGene00223663"/>
</dbReference>
<dbReference type="HOGENOM" id="CLU_022279_0_0_1"/>
<dbReference type="InParanoid" id="A8QC60"/>
<dbReference type="OrthoDB" id="10249697at2759"/>
<dbReference type="Proteomes" id="UP000006672">
    <property type="component" value="Unassembled WGS sequence"/>
</dbReference>
<dbReference type="GO" id="GO:0005737">
    <property type="term" value="C:cytoplasm"/>
    <property type="evidence" value="ECO:0007669"/>
    <property type="project" value="EnsemblMetazoa"/>
</dbReference>
<dbReference type="GO" id="GO:0005634">
    <property type="term" value="C:nucleus"/>
    <property type="evidence" value="ECO:0007669"/>
    <property type="project" value="EnsemblMetazoa"/>
</dbReference>
<dbReference type="GO" id="GO:0072669">
    <property type="term" value="C:tRNA-splicing ligase complex"/>
    <property type="evidence" value="ECO:0007669"/>
    <property type="project" value="UniProtKB-UniRule"/>
</dbReference>
<dbReference type="GO" id="GO:0005525">
    <property type="term" value="F:GTP binding"/>
    <property type="evidence" value="ECO:0007669"/>
    <property type="project" value="UniProtKB-KW"/>
</dbReference>
<dbReference type="GO" id="GO:0046872">
    <property type="term" value="F:metal ion binding"/>
    <property type="evidence" value="ECO:0007669"/>
    <property type="project" value="UniProtKB-KW"/>
</dbReference>
<dbReference type="GO" id="GO:0003972">
    <property type="term" value="F:RNA ligase (ATP) activity"/>
    <property type="evidence" value="ECO:0007669"/>
    <property type="project" value="EnsemblMetazoa"/>
</dbReference>
<dbReference type="GO" id="GO:0170057">
    <property type="term" value="F:RNA ligase (GTP) activity"/>
    <property type="evidence" value="ECO:0007669"/>
    <property type="project" value="UniProtKB-EC"/>
</dbReference>
<dbReference type="GO" id="GO:0007281">
    <property type="term" value="P:germ cell development"/>
    <property type="evidence" value="ECO:0007669"/>
    <property type="project" value="EnsemblMetazoa"/>
</dbReference>
<dbReference type="GO" id="GO:0036498">
    <property type="term" value="P:IRE1-mediated unfolded protein response"/>
    <property type="evidence" value="ECO:0007669"/>
    <property type="project" value="EnsemblMetazoa"/>
</dbReference>
<dbReference type="GO" id="GO:0006388">
    <property type="term" value="P:tRNA splicing, via endonucleolytic cleavage and ligation"/>
    <property type="evidence" value="ECO:0007669"/>
    <property type="project" value="UniProtKB-UniRule"/>
</dbReference>
<dbReference type="GO" id="GO:0040025">
    <property type="term" value="P:vulval development"/>
    <property type="evidence" value="ECO:0007669"/>
    <property type="project" value="EnsemblMetazoa"/>
</dbReference>
<dbReference type="FunFam" id="3.90.1860.10:FF:000001">
    <property type="entry name" value="tRNA-splicing ligase RtcB homolog"/>
    <property type="match status" value="1"/>
</dbReference>
<dbReference type="Gene3D" id="3.90.1860.10">
    <property type="entry name" value="tRNA-splicing ligase RtcB"/>
    <property type="match status" value="1"/>
</dbReference>
<dbReference type="HAMAP" id="MF_03144">
    <property type="entry name" value="RtcB_euk"/>
    <property type="match status" value="1"/>
</dbReference>
<dbReference type="InterPro" id="IPR001233">
    <property type="entry name" value="RtcB"/>
</dbReference>
<dbReference type="InterPro" id="IPR036025">
    <property type="entry name" value="RtcB-like_sf"/>
</dbReference>
<dbReference type="InterPro" id="IPR027513">
    <property type="entry name" value="RtcB_euk"/>
</dbReference>
<dbReference type="PANTHER" id="PTHR11118">
    <property type="entry name" value="RNA-SPLICING LIGASE RTCB HOMOLOG"/>
    <property type="match status" value="1"/>
</dbReference>
<dbReference type="PANTHER" id="PTHR11118:SF1">
    <property type="entry name" value="RNA-SPLICING LIGASE RTCB HOMOLOG"/>
    <property type="match status" value="1"/>
</dbReference>
<dbReference type="Pfam" id="PF01139">
    <property type="entry name" value="RtcB"/>
    <property type="match status" value="1"/>
</dbReference>
<dbReference type="SUPFAM" id="SSF103365">
    <property type="entry name" value="Hypothetical protein PH1602"/>
    <property type="match status" value="1"/>
</dbReference>
<dbReference type="PROSITE" id="PS01288">
    <property type="entry name" value="UPF0027"/>
    <property type="match status" value="1"/>
</dbReference>
<comment type="function">
    <text evidence="1">Catalytic subunit of the tRNA-splicing ligase complex that acts by directly joining spliced tRNA halves to mature-sized tRNAs by incorporating the precursor-derived splice junction phosphate into the mature tRNA as a canonical 3',5'-phosphodiester. May act as an RNA ligase with broad substrate specificity, and may function toward other RNAs.</text>
</comment>
<comment type="catalytic activity">
    <reaction evidence="1">
        <text>a 3'-end 3'-phospho-ribonucleotide-RNA + a 5'-end dephospho-ribonucleoside-RNA + GTP = a ribonucleotidyl-ribonucleotide-RNA + GMP + diphosphate</text>
        <dbReference type="Rhea" id="RHEA:68076"/>
        <dbReference type="Rhea" id="RHEA-COMP:10463"/>
        <dbReference type="Rhea" id="RHEA-COMP:13936"/>
        <dbReference type="Rhea" id="RHEA-COMP:17355"/>
        <dbReference type="ChEBI" id="CHEBI:33019"/>
        <dbReference type="ChEBI" id="CHEBI:37565"/>
        <dbReference type="ChEBI" id="CHEBI:58115"/>
        <dbReference type="ChEBI" id="CHEBI:83062"/>
        <dbReference type="ChEBI" id="CHEBI:138284"/>
        <dbReference type="ChEBI" id="CHEBI:173118"/>
        <dbReference type="EC" id="6.5.1.8"/>
    </reaction>
</comment>
<comment type="catalytic activity">
    <reaction evidence="1">
        <text>a 3'-end 2',3'-cyclophospho-ribonucleotide-RNA + a 5'-end dephospho-ribonucleoside-RNA + GTP + H2O = a ribonucleotidyl-ribonucleotide-RNA + GMP + diphosphate + H(+)</text>
        <dbReference type="Rhea" id="RHEA:68080"/>
        <dbReference type="Rhea" id="RHEA-COMP:10464"/>
        <dbReference type="Rhea" id="RHEA-COMP:13936"/>
        <dbReference type="Rhea" id="RHEA-COMP:17355"/>
        <dbReference type="ChEBI" id="CHEBI:15377"/>
        <dbReference type="ChEBI" id="CHEBI:15378"/>
        <dbReference type="ChEBI" id="CHEBI:33019"/>
        <dbReference type="ChEBI" id="CHEBI:37565"/>
        <dbReference type="ChEBI" id="CHEBI:58115"/>
        <dbReference type="ChEBI" id="CHEBI:83064"/>
        <dbReference type="ChEBI" id="CHEBI:138284"/>
        <dbReference type="ChEBI" id="CHEBI:173118"/>
        <dbReference type="EC" id="6.5.1.8"/>
    </reaction>
</comment>
<comment type="cofactor">
    <cofactor evidence="1">
        <name>Mn(2+)</name>
        <dbReference type="ChEBI" id="CHEBI:29035"/>
    </cofactor>
    <text evidence="1">Binds 2 manganese ions per subunit.</text>
</comment>
<comment type="subunit">
    <text evidence="1">Catalytic component of the tRNA-splicing ligase complex.</text>
</comment>
<comment type="miscellaneous">
    <text evidence="1">Ligation probably proceeds through 3 nucleotidyl transfer steps, with 2',3'-cyclic phosphate termini being hydrolyzed to 3'-P termini in a step that precedes 3'-P activation with GMP. In the first nucleotidyl transfer step, RTCB reacts with GTP to form a covalent RTCB-histidine-GMP intermediate with release of PPi; in the second step, the GMP moiety is transferred to the RNA 3'-P; in the third step, the 5'-OH from the opposite RNA strand attacks the activated 3'-P to form a 3',5'-phosphodiester bond and release GMP.</text>
</comment>
<comment type="similarity">
    <text evidence="1">Belongs to the RtcB family.</text>
</comment>